<reference key="1">
    <citation type="journal article" date="1999" name="Plant Physiol.">
        <title>Organellar and cytosolic localization of four phosphoribosyl diphosphate synthase isozymes in spinach.</title>
        <authorList>
            <person name="Krath B.N."/>
            <person name="Hove-Jensen B."/>
        </authorList>
    </citation>
    <scope>NUCLEOTIDE SEQUENCE [MRNA]</scope>
    <source>
        <tissue>Leaf</tissue>
    </source>
</reference>
<feature type="transit peptide" description="Chloroplast" evidence="1">
    <location>
        <begin position="1"/>
        <end position="42"/>
    </location>
</feature>
<feature type="chain" id="PRO_0000016845" description="Ribose-phosphate pyrophosphokinase 2, chloroplastic">
    <location>
        <begin position="43"/>
        <end position="395"/>
    </location>
</feature>
<feature type="region of interest" description="Disordered" evidence="2">
    <location>
        <begin position="1"/>
        <end position="33"/>
    </location>
</feature>
<feature type="region of interest" description="Binding of phosphoribosylpyrophosphate" evidence="1">
    <location>
        <begin position="295"/>
        <end position="310"/>
    </location>
</feature>
<feature type="compositionally biased region" description="Low complexity" evidence="2">
    <location>
        <begin position="1"/>
        <end position="23"/>
    </location>
</feature>
<feature type="binding site" evidence="1">
    <location>
        <position position="209"/>
    </location>
    <ligand>
        <name>Mg(2+)</name>
        <dbReference type="ChEBI" id="CHEBI:18420"/>
    </ligand>
</feature>
<feature type="binding site" evidence="1">
    <location>
        <position position="211"/>
    </location>
    <ligand>
        <name>Mg(2+)</name>
        <dbReference type="ChEBI" id="CHEBI:18420"/>
    </ligand>
</feature>
<feature type="binding site" evidence="1">
    <location>
        <position position="220"/>
    </location>
    <ligand>
        <name>Mg(2+)</name>
        <dbReference type="ChEBI" id="CHEBI:18420"/>
    </ligand>
</feature>
<feature type="binding site" evidence="1">
    <location>
        <position position="224"/>
    </location>
    <ligand>
        <name>Mg(2+)</name>
        <dbReference type="ChEBI" id="CHEBI:18420"/>
    </ligand>
</feature>
<comment type="catalytic activity">
    <reaction>
        <text>D-ribose 5-phosphate + ATP = 5-phospho-alpha-D-ribose 1-diphosphate + AMP + H(+)</text>
        <dbReference type="Rhea" id="RHEA:15609"/>
        <dbReference type="ChEBI" id="CHEBI:15378"/>
        <dbReference type="ChEBI" id="CHEBI:30616"/>
        <dbReference type="ChEBI" id="CHEBI:58017"/>
        <dbReference type="ChEBI" id="CHEBI:78346"/>
        <dbReference type="ChEBI" id="CHEBI:456215"/>
        <dbReference type="EC" id="2.7.6.1"/>
    </reaction>
</comment>
<comment type="subcellular location">
    <subcellularLocation>
        <location evidence="3">Plastid</location>
        <location evidence="3">Chloroplast</location>
    </subcellularLocation>
</comment>
<comment type="similarity">
    <text evidence="3">Belongs to the ribose-phosphate pyrophosphokinase family.</text>
</comment>
<gene>
    <name type="primary">PRS2</name>
</gene>
<proteinExistence type="evidence at transcript level"/>
<evidence type="ECO:0000255" key="1"/>
<evidence type="ECO:0000256" key="2">
    <source>
        <dbReference type="SAM" id="MobiDB-lite"/>
    </source>
</evidence>
<evidence type="ECO:0000305" key="3"/>
<protein>
    <recommendedName>
        <fullName>Ribose-phosphate pyrophosphokinase 2, chloroplastic</fullName>
        <ecNumber>2.7.6.1</ecNumber>
    </recommendedName>
    <alternativeName>
        <fullName>Phosphoribosyl pyrophosphate synthase 2</fullName>
    </alternativeName>
</protein>
<name>KPRS2_SPIOL</name>
<organism>
    <name type="scientific">Spinacia oleracea</name>
    <name type="common">Spinach</name>
    <dbReference type="NCBI Taxonomy" id="3562"/>
    <lineage>
        <taxon>Eukaryota</taxon>
        <taxon>Viridiplantae</taxon>
        <taxon>Streptophyta</taxon>
        <taxon>Embryophyta</taxon>
        <taxon>Tracheophyta</taxon>
        <taxon>Spermatophyta</taxon>
        <taxon>Magnoliopsida</taxon>
        <taxon>eudicotyledons</taxon>
        <taxon>Gunneridae</taxon>
        <taxon>Pentapetalae</taxon>
        <taxon>Caryophyllales</taxon>
        <taxon>Chenopodiaceae</taxon>
        <taxon>Chenopodioideae</taxon>
        <taxon>Anserineae</taxon>
        <taxon>Spinacia</taxon>
    </lineage>
</organism>
<sequence length="395" mass="42715">MASPAPRSLSSSSSSSSSSFCPSISPPPRSPSRASLPFSVKCNTVEPLKLVNGKPSVPILDEQSLPKFLHSKRLESSVNRSNTRLKLFSGLANPALAKEVAWYMGLELGKVKIKRFADGEIYVQLEESVRGCDVFIIQPTSPPANENLMELLIMIDACRRASAKNITAVIPYFGYARADRKTQGRESIAAKLVANLITEAGANRVLACDLHSGQSMGYFDIPVDHVYCQPVILDYLASKGIASSDLVVVSPDVGGVARARAFAKKLSDAPLAIVDKRRHAHNVAEVMNLIGDVKGKVAVMLDDMIDTAGTITKGAELLHEEGAREVYACCTHAVFSPPAIERLSSGCFQEVIITNTLPVAEKNFFRQLTVLSTANLLGETIWRVHDDSSVSSIFQ</sequence>
<dbReference type="EC" id="2.7.6.1"/>
<dbReference type="EMBL" id="AJ006941">
    <property type="protein sequence ID" value="CAB43600.1"/>
    <property type="molecule type" value="mRNA"/>
</dbReference>
<dbReference type="SMR" id="Q9XG99"/>
<dbReference type="OrthoDB" id="413572at2759"/>
<dbReference type="Proteomes" id="UP001155700">
    <property type="component" value="Unplaced"/>
</dbReference>
<dbReference type="GO" id="GO:0009507">
    <property type="term" value="C:chloroplast"/>
    <property type="evidence" value="ECO:0007669"/>
    <property type="project" value="UniProtKB-SubCell"/>
</dbReference>
<dbReference type="GO" id="GO:0005737">
    <property type="term" value="C:cytoplasm"/>
    <property type="evidence" value="ECO:0000318"/>
    <property type="project" value="GO_Central"/>
</dbReference>
<dbReference type="GO" id="GO:0002189">
    <property type="term" value="C:ribose phosphate diphosphokinase complex"/>
    <property type="evidence" value="ECO:0000318"/>
    <property type="project" value="GO_Central"/>
</dbReference>
<dbReference type="GO" id="GO:0005524">
    <property type="term" value="F:ATP binding"/>
    <property type="evidence" value="ECO:0007669"/>
    <property type="project" value="UniProtKB-KW"/>
</dbReference>
<dbReference type="GO" id="GO:0016301">
    <property type="term" value="F:kinase activity"/>
    <property type="evidence" value="ECO:0007669"/>
    <property type="project" value="UniProtKB-KW"/>
</dbReference>
<dbReference type="GO" id="GO:0000287">
    <property type="term" value="F:magnesium ion binding"/>
    <property type="evidence" value="ECO:0007669"/>
    <property type="project" value="InterPro"/>
</dbReference>
<dbReference type="GO" id="GO:0004749">
    <property type="term" value="F:ribose phosphate diphosphokinase activity"/>
    <property type="evidence" value="ECO:0000318"/>
    <property type="project" value="GO_Central"/>
</dbReference>
<dbReference type="GO" id="GO:0006015">
    <property type="term" value="P:5-phosphoribose 1-diphosphate biosynthetic process"/>
    <property type="evidence" value="ECO:0000318"/>
    <property type="project" value="GO_Central"/>
</dbReference>
<dbReference type="GO" id="GO:0006164">
    <property type="term" value="P:purine nucleotide biosynthetic process"/>
    <property type="evidence" value="ECO:0000318"/>
    <property type="project" value="GO_Central"/>
</dbReference>
<dbReference type="GO" id="GO:0009156">
    <property type="term" value="P:ribonucleoside monophosphate biosynthetic process"/>
    <property type="evidence" value="ECO:0007669"/>
    <property type="project" value="InterPro"/>
</dbReference>
<dbReference type="CDD" id="cd06223">
    <property type="entry name" value="PRTases_typeI"/>
    <property type="match status" value="1"/>
</dbReference>
<dbReference type="FunFam" id="3.40.50.2020:FF:000002">
    <property type="entry name" value="Ribose-phosphate pyrophosphokinase"/>
    <property type="match status" value="1"/>
</dbReference>
<dbReference type="FunFam" id="3.40.50.2020:FF:000014">
    <property type="entry name" value="Ribose-phosphate pyrophosphokinase 1"/>
    <property type="match status" value="1"/>
</dbReference>
<dbReference type="Gene3D" id="3.40.50.2020">
    <property type="match status" value="2"/>
</dbReference>
<dbReference type="HAMAP" id="MF_00583_B">
    <property type="entry name" value="RibP_PPkinase_B"/>
    <property type="match status" value="1"/>
</dbReference>
<dbReference type="InterPro" id="IPR000842">
    <property type="entry name" value="PRib_PP_synth_CS"/>
</dbReference>
<dbReference type="InterPro" id="IPR029099">
    <property type="entry name" value="Pribosyltran_N"/>
</dbReference>
<dbReference type="InterPro" id="IPR000836">
    <property type="entry name" value="PRibTrfase_dom"/>
</dbReference>
<dbReference type="InterPro" id="IPR029057">
    <property type="entry name" value="PRTase-like"/>
</dbReference>
<dbReference type="InterPro" id="IPR005946">
    <property type="entry name" value="Rib-P_diPkinase"/>
</dbReference>
<dbReference type="InterPro" id="IPR037515">
    <property type="entry name" value="Rib-P_diPkinase_bac"/>
</dbReference>
<dbReference type="NCBIfam" id="NF002320">
    <property type="entry name" value="PRK01259.1"/>
    <property type="match status" value="1"/>
</dbReference>
<dbReference type="NCBIfam" id="NF002758">
    <property type="entry name" value="PRK02812.1"/>
    <property type="match status" value="1"/>
</dbReference>
<dbReference type="NCBIfam" id="TIGR01251">
    <property type="entry name" value="ribP_PPkin"/>
    <property type="match status" value="1"/>
</dbReference>
<dbReference type="PANTHER" id="PTHR10210">
    <property type="entry name" value="RIBOSE-PHOSPHATE DIPHOSPHOKINASE FAMILY MEMBER"/>
    <property type="match status" value="1"/>
</dbReference>
<dbReference type="PANTHER" id="PTHR10210:SF41">
    <property type="entry name" value="RIBOSE-PHOSPHATE PYROPHOSPHOKINASE 1, CHLOROPLASTIC"/>
    <property type="match status" value="1"/>
</dbReference>
<dbReference type="Pfam" id="PF14572">
    <property type="entry name" value="Pribosyl_synth"/>
    <property type="match status" value="1"/>
</dbReference>
<dbReference type="Pfam" id="PF13793">
    <property type="entry name" value="Pribosyltran_N"/>
    <property type="match status" value="1"/>
</dbReference>
<dbReference type="SMART" id="SM01400">
    <property type="entry name" value="Pribosyltran_N"/>
    <property type="match status" value="1"/>
</dbReference>
<dbReference type="SUPFAM" id="SSF53271">
    <property type="entry name" value="PRTase-like"/>
    <property type="match status" value="1"/>
</dbReference>
<dbReference type="PROSITE" id="PS00114">
    <property type="entry name" value="PRPP_SYNTHASE"/>
    <property type="match status" value="1"/>
</dbReference>
<accession>Q9XG99</accession>
<keyword id="KW-0067">ATP-binding</keyword>
<keyword id="KW-0150">Chloroplast</keyword>
<keyword id="KW-0418">Kinase</keyword>
<keyword id="KW-0460">Magnesium</keyword>
<keyword id="KW-0479">Metal-binding</keyword>
<keyword id="KW-0545">Nucleotide biosynthesis</keyword>
<keyword id="KW-0547">Nucleotide-binding</keyword>
<keyword id="KW-0934">Plastid</keyword>
<keyword id="KW-1185">Reference proteome</keyword>
<keyword id="KW-0808">Transferase</keyword>
<keyword id="KW-0809">Transit peptide</keyword>